<gene>
    <name evidence="1" type="primary">psbN</name>
</gene>
<accession>Q71NS7</accession>
<comment type="function">
    <text evidence="1">May play a role in photosystem I and II biogenesis.</text>
</comment>
<comment type="subcellular location">
    <subcellularLocation>
        <location evidence="1">Plastid</location>
        <location evidence="1">Chloroplast thylakoid membrane</location>
        <topology evidence="1">Single-pass membrane protein</topology>
    </subcellularLocation>
</comment>
<comment type="similarity">
    <text evidence="1">Belongs to the PsbN family.</text>
</comment>
<comment type="caution">
    <text evidence="1">Originally thought to be a component of PSII; based on experiments in Synechocystis, N.tabacum and barley, and its absence from PSII in T.elongatus and T.vulcanus, this is probably not true.</text>
</comment>
<comment type="sequence caution" evidence="2">
    <conflict type="erroneous initiation">
        <sequence resource="EMBL-CDS" id="AAQ03803"/>
    </conflict>
    <text>Extended N-terminus.</text>
</comment>
<geneLocation type="chloroplast"/>
<dbReference type="EMBL" id="AF417408">
    <property type="protein sequence ID" value="AAQ03803.1"/>
    <property type="status" value="ALT_INIT"/>
    <property type="molecule type" value="Genomic_DNA"/>
</dbReference>
<dbReference type="SMR" id="Q71NS7"/>
<dbReference type="GO" id="GO:0009535">
    <property type="term" value="C:chloroplast thylakoid membrane"/>
    <property type="evidence" value="ECO:0007669"/>
    <property type="project" value="UniProtKB-SubCell"/>
</dbReference>
<dbReference type="GO" id="GO:0015979">
    <property type="term" value="P:photosynthesis"/>
    <property type="evidence" value="ECO:0007669"/>
    <property type="project" value="InterPro"/>
</dbReference>
<dbReference type="HAMAP" id="MF_00293">
    <property type="entry name" value="PSII_PsbN"/>
    <property type="match status" value="1"/>
</dbReference>
<dbReference type="InterPro" id="IPR003398">
    <property type="entry name" value="PSII_PsbN"/>
</dbReference>
<dbReference type="PANTHER" id="PTHR35326">
    <property type="entry name" value="PROTEIN PSBN"/>
    <property type="match status" value="1"/>
</dbReference>
<dbReference type="PANTHER" id="PTHR35326:SF3">
    <property type="entry name" value="PROTEIN PSBN"/>
    <property type="match status" value="1"/>
</dbReference>
<dbReference type="Pfam" id="PF02468">
    <property type="entry name" value="PsbN"/>
    <property type="match status" value="1"/>
</dbReference>
<proteinExistence type="inferred from homology"/>
<sequence>METATLVAIFISCSLVSFTGYALYTAFGQPSKELRDPFEEHED</sequence>
<protein>
    <recommendedName>
        <fullName evidence="1">Protein PsbN</fullName>
    </recommendedName>
</protein>
<feature type="chain" id="PRO_0000207909" description="Protein PsbN">
    <location>
        <begin position="1"/>
        <end position="43"/>
    </location>
</feature>
<feature type="transmembrane region" description="Helical" evidence="1">
    <location>
        <begin position="5"/>
        <end position="27"/>
    </location>
</feature>
<evidence type="ECO:0000255" key="1">
    <source>
        <dbReference type="HAMAP-Rule" id="MF_00293"/>
    </source>
</evidence>
<evidence type="ECO:0000305" key="2"/>
<keyword id="KW-0150">Chloroplast</keyword>
<keyword id="KW-0472">Membrane</keyword>
<keyword id="KW-0934">Plastid</keyword>
<keyword id="KW-0793">Thylakoid</keyword>
<keyword id="KW-0812">Transmembrane</keyword>
<keyword id="KW-1133">Transmembrane helix</keyword>
<organism>
    <name type="scientific">Hylocomium splendens</name>
    <name type="common">Glittering wood-moss</name>
    <name type="synonym">Hypnum splendens</name>
    <dbReference type="NCBI Taxonomy" id="53007"/>
    <lineage>
        <taxon>Eukaryota</taxon>
        <taxon>Viridiplantae</taxon>
        <taxon>Streptophyta</taxon>
        <taxon>Embryophyta</taxon>
        <taxon>Bryophyta</taxon>
        <taxon>Bryophytina</taxon>
        <taxon>Bryopsida</taxon>
        <taxon>Bryidae</taxon>
        <taxon>Hypnanae</taxon>
        <taxon>Hypnales</taxon>
        <taxon>Hylocomiaceae</taxon>
        <taxon>Hylocomium</taxon>
    </lineage>
</organism>
<name>PSBN_HYLSP</name>
<reference key="1">
    <citation type="submission" date="2001-09" db="EMBL/GenBank/DDBJ databases">
        <title>Phylogeny of moss family Brachytheciaceae based on morphological and molecular trnL-F, ITS2 and psbT-H data.</title>
        <authorList>
            <person name="Huttunen S."/>
            <person name="Ignatov M.S."/>
        </authorList>
    </citation>
    <scope>NUCLEOTIDE SEQUENCE [GENOMIC DNA]</scope>
</reference>